<proteinExistence type="evidence at protein level"/>
<sequence>MSRDYNCTTDDQLAWGIPSISHAWGLWALLGVVTVLLLISLAALLSQWTRGRRRNQEGQGPLSGRSAEEVPLYGNLHYLQTGRLSQEPRSEEQDPPSSGGLARGAEEAMCYTSLQLRPAQGRIPSSGNPIKYCEVVLDSEPKPQAPGPEPELYASVCAQTRRGRASFPDQAYANSQPAPS</sequence>
<comment type="function">
    <text evidence="6">Negatively regulates T-cell antigen receptor (TCR)-mediated signaling. Involved in positive selection of T-cells.</text>
</comment>
<comment type="subunit">
    <text evidence="1">Homodimer; disulfide-linked. When phosphorylated, interacts with PTPN11/SHP2, GRB2 and CSK (By similarity).</text>
</comment>
<comment type="subcellular location">
    <subcellularLocation>
        <location evidence="1">Cell membrane</location>
        <topology evidence="1">Single-pass type III membrane protein</topology>
    </subcellularLocation>
</comment>
<comment type="tissue specificity">
    <text evidence="6">Expressed in thymus and spleen, with highest levels in immature thymocytes (at protein level).</text>
</comment>
<comment type="PTM">
    <text evidence="1">Phosphorylated on tyrosines upon TCR activation; which leads to the recruitment of PTPN11, GRB2 and CSK.</text>
</comment>
<comment type="disruption phenotype">
    <text evidence="6">Mice are viable and fertile, with normal growth and no obvious abnormalities. They show normal B-cell development and peripheral B-cell functions, but have mildly altered thymic development probably due to enhanced TCR signaling. This results in a greater susceptibility to autoimmune diseases.</text>
</comment>
<reference key="1">
    <citation type="journal article" date="1999" name="J. Exp. Med.">
        <title>SHP2-interacting transmembrane adaptor protein (SIT), a novel disulfide-linked dimer regulating human T-cell activation.</title>
        <authorList>
            <person name="Marie-Cardine A."/>
            <person name="Kirchgessner H."/>
            <person name="Bruyns E."/>
            <person name="Shevchenko A."/>
            <person name="Mann M."/>
            <person name="Autschbach F."/>
            <person name="Ratnofsky S."/>
            <person name="Meuer S."/>
            <person name="Schraven B."/>
        </authorList>
    </citation>
    <scope>NUCLEOTIDE SEQUENCE [MRNA]</scope>
</reference>
<reference key="2">
    <citation type="journal article" date="2005" name="Science">
        <title>The transcriptional landscape of the mammalian genome.</title>
        <authorList>
            <person name="Carninci P."/>
            <person name="Kasukawa T."/>
            <person name="Katayama S."/>
            <person name="Gough J."/>
            <person name="Frith M.C."/>
            <person name="Maeda N."/>
            <person name="Oyama R."/>
            <person name="Ravasi T."/>
            <person name="Lenhard B."/>
            <person name="Wells C."/>
            <person name="Kodzius R."/>
            <person name="Shimokawa K."/>
            <person name="Bajic V.B."/>
            <person name="Brenner S.E."/>
            <person name="Batalov S."/>
            <person name="Forrest A.R."/>
            <person name="Zavolan M."/>
            <person name="Davis M.J."/>
            <person name="Wilming L.G."/>
            <person name="Aidinis V."/>
            <person name="Allen J.E."/>
            <person name="Ambesi-Impiombato A."/>
            <person name="Apweiler R."/>
            <person name="Aturaliya R.N."/>
            <person name="Bailey T.L."/>
            <person name="Bansal M."/>
            <person name="Baxter L."/>
            <person name="Beisel K.W."/>
            <person name="Bersano T."/>
            <person name="Bono H."/>
            <person name="Chalk A.M."/>
            <person name="Chiu K.P."/>
            <person name="Choudhary V."/>
            <person name="Christoffels A."/>
            <person name="Clutterbuck D.R."/>
            <person name="Crowe M.L."/>
            <person name="Dalla E."/>
            <person name="Dalrymple B.P."/>
            <person name="de Bono B."/>
            <person name="Della Gatta G."/>
            <person name="di Bernardo D."/>
            <person name="Down T."/>
            <person name="Engstrom P."/>
            <person name="Fagiolini M."/>
            <person name="Faulkner G."/>
            <person name="Fletcher C.F."/>
            <person name="Fukushima T."/>
            <person name="Furuno M."/>
            <person name="Futaki S."/>
            <person name="Gariboldi M."/>
            <person name="Georgii-Hemming P."/>
            <person name="Gingeras T.R."/>
            <person name="Gojobori T."/>
            <person name="Green R.E."/>
            <person name="Gustincich S."/>
            <person name="Harbers M."/>
            <person name="Hayashi Y."/>
            <person name="Hensch T.K."/>
            <person name="Hirokawa N."/>
            <person name="Hill D."/>
            <person name="Huminiecki L."/>
            <person name="Iacono M."/>
            <person name="Ikeo K."/>
            <person name="Iwama A."/>
            <person name="Ishikawa T."/>
            <person name="Jakt M."/>
            <person name="Kanapin A."/>
            <person name="Katoh M."/>
            <person name="Kawasawa Y."/>
            <person name="Kelso J."/>
            <person name="Kitamura H."/>
            <person name="Kitano H."/>
            <person name="Kollias G."/>
            <person name="Krishnan S.P."/>
            <person name="Kruger A."/>
            <person name="Kummerfeld S.K."/>
            <person name="Kurochkin I.V."/>
            <person name="Lareau L.F."/>
            <person name="Lazarevic D."/>
            <person name="Lipovich L."/>
            <person name="Liu J."/>
            <person name="Liuni S."/>
            <person name="McWilliam S."/>
            <person name="Madan Babu M."/>
            <person name="Madera M."/>
            <person name="Marchionni L."/>
            <person name="Matsuda H."/>
            <person name="Matsuzawa S."/>
            <person name="Miki H."/>
            <person name="Mignone F."/>
            <person name="Miyake S."/>
            <person name="Morris K."/>
            <person name="Mottagui-Tabar S."/>
            <person name="Mulder N."/>
            <person name="Nakano N."/>
            <person name="Nakauchi H."/>
            <person name="Ng P."/>
            <person name="Nilsson R."/>
            <person name="Nishiguchi S."/>
            <person name="Nishikawa S."/>
            <person name="Nori F."/>
            <person name="Ohara O."/>
            <person name="Okazaki Y."/>
            <person name="Orlando V."/>
            <person name="Pang K.C."/>
            <person name="Pavan W.J."/>
            <person name="Pavesi G."/>
            <person name="Pesole G."/>
            <person name="Petrovsky N."/>
            <person name="Piazza S."/>
            <person name="Reed J."/>
            <person name="Reid J.F."/>
            <person name="Ring B.Z."/>
            <person name="Ringwald M."/>
            <person name="Rost B."/>
            <person name="Ruan Y."/>
            <person name="Salzberg S.L."/>
            <person name="Sandelin A."/>
            <person name="Schneider C."/>
            <person name="Schoenbach C."/>
            <person name="Sekiguchi K."/>
            <person name="Semple C.A."/>
            <person name="Seno S."/>
            <person name="Sessa L."/>
            <person name="Sheng Y."/>
            <person name="Shibata Y."/>
            <person name="Shimada H."/>
            <person name="Shimada K."/>
            <person name="Silva D."/>
            <person name="Sinclair B."/>
            <person name="Sperling S."/>
            <person name="Stupka E."/>
            <person name="Sugiura K."/>
            <person name="Sultana R."/>
            <person name="Takenaka Y."/>
            <person name="Taki K."/>
            <person name="Tammoja K."/>
            <person name="Tan S.L."/>
            <person name="Tang S."/>
            <person name="Taylor M.S."/>
            <person name="Tegner J."/>
            <person name="Teichmann S.A."/>
            <person name="Ueda H.R."/>
            <person name="van Nimwegen E."/>
            <person name="Verardo R."/>
            <person name="Wei C.L."/>
            <person name="Yagi K."/>
            <person name="Yamanishi H."/>
            <person name="Zabarovsky E."/>
            <person name="Zhu S."/>
            <person name="Zimmer A."/>
            <person name="Hide W."/>
            <person name="Bult C."/>
            <person name="Grimmond S.M."/>
            <person name="Teasdale R.D."/>
            <person name="Liu E.T."/>
            <person name="Brusic V."/>
            <person name="Quackenbush J."/>
            <person name="Wahlestedt C."/>
            <person name="Mattick J.S."/>
            <person name="Hume D.A."/>
            <person name="Kai C."/>
            <person name="Sasaki D."/>
            <person name="Tomaru Y."/>
            <person name="Fukuda S."/>
            <person name="Kanamori-Katayama M."/>
            <person name="Suzuki M."/>
            <person name="Aoki J."/>
            <person name="Arakawa T."/>
            <person name="Iida J."/>
            <person name="Imamura K."/>
            <person name="Itoh M."/>
            <person name="Kato T."/>
            <person name="Kawaji H."/>
            <person name="Kawagashira N."/>
            <person name="Kawashima T."/>
            <person name="Kojima M."/>
            <person name="Kondo S."/>
            <person name="Konno H."/>
            <person name="Nakano K."/>
            <person name="Ninomiya N."/>
            <person name="Nishio T."/>
            <person name="Okada M."/>
            <person name="Plessy C."/>
            <person name="Shibata K."/>
            <person name="Shiraki T."/>
            <person name="Suzuki S."/>
            <person name="Tagami M."/>
            <person name="Waki K."/>
            <person name="Watahiki A."/>
            <person name="Okamura-Oho Y."/>
            <person name="Suzuki H."/>
            <person name="Kawai J."/>
            <person name="Hayashizaki Y."/>
        </authorList>
    </citation>
    <scope>NUCLEOTIDE SEQUENCE [LARGE SCALE MRNA]</scope>
    <source>
        <strain>C57BL/6J</strain>
        <tissue>Thymus</tissue>
    </source>
</reference>
<reference key="3">
    <citation type="journal article" date="2004" name="Genome Res.">
        <title>The status, quality, and expansion of the NIH full-length cDNA project: the Mammalian Gene Collection (MGC).</title>
        <authorList>
            <consortium name="The MGC Project Team"/>
        </authorList>
    </citation>
    <scope>NUCLEOTIDE SEQUENCE [LARGE SCALE MRNA]</scope>
    <source>
        <strain>C57BL/6J</strain>
        <tissue>Thymus</tissue>
    </source>
</reference>
<reference key="4">
    <citation type="journal article" date="2005" name="Mol. Cell. Biol.">
        <title>The transmembrane adapter protein SIT regulates thymic development and peripheral T-cell functions.</title>
        <authorList>
            <person name="Simeoni L."/>
            <person name="Posevitz V."/>
            <person name="Koelsch U."/>
            <person name="Meinert I."/>
            <person name="Bruyns E."/>
            <person name="Pfeffer K."/>
            <person name="Reinhold D."/>
            <person name="Schraven B."/>
        </authorList>
    </citation>
    <scope>TISSUE SPECIFICITY</scope>
    <scope>FUNCTION</scope>
    <scope>DISRUPTION PHENOTYPE</scope>
</reference>
<reference key="5">
    <citation type="journal article" date="2010" name="Cell">
        <title>A tissue-specific atlas of mouse protein phosphorylation and expression.</title>
        <authorList>
            <person name="Huttlin E.L."/>
            <person name="Jedrychowski M.P."/>
            <person name="Elias J.E."/>
            <person name="Goswami T."/>
            <person name="Rad R."/>
            <person name="Beausoleil S.A."/>
            <person name="Villen J."/>
            <person name="Haas W."/>
            <person name="Sowa M.E."/>
            <person name="Gygi S.P."/>
        </authorList>
    </citation>
    <scope>PHOSPHORYLATION [LARGE SCALE ANALYSIS] AT SER-166</scope>
    <scope>IDENTIFICATION BY MASS SPECTROMETRY [LARGE SCALE ANALYSIS]</scope>
    <source>
        <tissue>Lung</tissue>
    </source>
</reference>
<dbReference type="EMBL" id="AJ236881">
    <property type="protein sequence ID" value="CAB41506.1"/>
    <property type="molecule type" value="mRNA"/>
</dbReference>
<dbReference type="EMBL" id="AK079882">
    <property type="protein sequence ID" value="BAC37773.1"/>
    <property type="molecule type" value="mRNA"/>
</dbReference>
<dbReference type="EMBL" id="BC064055">
    <property type="protein sequence ID" value="AAH64055.1"/>
    <property type="molecule type" value="mRNA"/>
</dbReference>
<dbReference type="CCDS" id="CCDS18096.1"/>
<dbReference type="RefSeq" id="NP_062309.2">
    <property type="nucleotide sequence ID" value="NM_019436.3"/>
</dbReference>
<dbReference type="SMR" id="Q8C503"/>
<dbReference type="FunCoup" id="Q8C503">
    <property type="interactions" value="721"/>
</dbReference>
<dbReference type="IntAct" id="Q8C503">
    <property type="interactions" value="4"/>
</dbReference>
<dbReference type="STRING" id="10090.ENSMUSP00000030180"/>
<dbReference type="GlyCosmos" id="Q8C503">
    <property type="glycosylation" value="1 site, No reported glycans"/>
</dbReference>
<dbReference type="GlyGen" id="Q8C503">
    <property type="glycosylation" value="1 site"/>
</dbReference>
<dbReference type="iPTMnet" id="Q8C503"/>
<dbReference type="PhosphoSitePlus" id="Q8C503"/>
<dbReference type="jPOST" id="Q8C503"/>
<dbReference type="PaxDb" id="10090-ENSMUSP00000030180"/>
<dbReference type="PeptideAtlas" id="Q8C503"/>
<dbReference type="ProteomicsDB" id="261240"/>
<dbReference type="Antibodypedia" id="11587">
    <property type="antibodies" value="210 antibodies from 27 providers"/>
</dbReference>
<dbReference type="DNASU" id="54390"/>
<dbReference type="Ensembl" id="ENSMUST00000030180.7">
    <property type="protein sequence ID" value="ENSMUSP00000030180.7"/>
    <property type="gene ID" value="ENSMUSG00000028460.7"/>
</dbReference>
<dbReference type="GeneID" id="54390"/>
<dbReference type="KEGG" id="mmu:54390"/>
<dbReference type="UCSC" id="uc008spw.2">
    <property type="organism name" value="mouse"/>
</dbReference>
<dbReference type="AGR" id="MGI:1889342"/>
<dbReference type="CTD" id="27240"/>
<dbReference type="MGI" id="MGI:1889342">
    <property type="gene designation" value="Sit1"/>
</dbReference>
<dbReference type="VEuPathDB" id="HostDB:ENSMUSG00000028460"/>
<dbReference type="eggNOG" id="ENOG502S87Q">
    <property type="taxonomic scope" value="Eukaryota"/>
</dbReference>
<dbReference type="GeneTree" id="ENSGT00390000016476"/>
<dbReference type="HOGENOM" id="CLU_111407_0_0_1"/>
<dbReference type="InParanoid" id="Q8C503"/>
<dbReference type="OMA" id="WTRGRSK"/>
<dbReference type="OrthoDB" id="9414978at2759"/>
<dbReference type="PhylomeDB" id="Q8C503"/>
<dbReference type="TreeFam" id="TF337816"/>
<dbReference type="BioGRID-ORCS" id="54390">
    <property type="hits" value="1 hit in 78 CRISPR screens"/>
</dbReference>
<dbReference type="ChiTaRS" id="Slc6a20b">
    <property type="organism name" value="mouse"/>
</dbReference>
<dbReference type="PRO" id="PR:Q8C503"/>
<dbReference type="Proteomes" id="UP000000589">
    <property type="component" value="Chromosome 4"/>
</dbReference>
<dbReference type="RNAct" id="Q8C503">
    <property type="molecule type" value="protein"/>
</dbReference>
<dbReference type="Bgee" id="ENSMUSG00000028460">
    <property type="expression patterns" value="Expressed in thymus and 35 other cell types or tissues"/>
</dbReference>
<dbReference type="GO" id="GO:0005886">
    <property type="term" value="C:plasma membrane"/>
    <property type="evidence" value="ECO:0000250"/>
    <property type="project" value="UniProtKB"/>
</dbReference>
<dbReference type="GO" id="GO:0019900">
    <property type="term" value="F:kinase binding"/>
    <property type="evidence" value="ECO:0007669"/>
    <property type="project" value="Ensembl"/>
</dbReference>
<dbReference type="GO" id="GO:0002250">
    <property type="term" value="P:adaptive immune response"/>
    <property type="evidence" value="ECO:0007669"/>
    <property type="project" value="UniProtKB-KW"/>
</dbReference>
<dbReference type="GO" id="GO:0050863">
    <property type="term" value="P:regulation of T cell activation"/>
    <property type="evidence" value="ECO:0000250"/>
    <property type="project" value="UniProtKB"/>
</dbReference>
<dbReference type="GO" id="GO:0007165">
    <property type="term" value="P:signal transduction"/>
    <property type="evidence" value="ECO:0007669"/>
    <property type="project" value="InterPro"/>
</dbReference>
<dbReference type="GO" id="GO:0043029">
    <property type="term" value="P:T cell homeostasis"/>
    <property type="evidence" value="ECO:0007669"/>
    <property type="project" value="InterPro"/>
</dbReference>
<dbReference type="InterPro" id="IPR033269">
    <property type="entry name" value="Sit1"/>
</dbReference>
<dbReference type="PANTHER" id="PTHR15604">
    <property type="entry name" value="SIGNALING THRESHOLD-REGULATING TRANSMEMBRANE ADAPTER 1"/>
    <property type="match status" value="1"/>
</dbReference>
<dbReference type="PANTHER" id="PTHR15604:SF0">
    <property type="entry name" value="SIGNALING THRESHOLD-REGULATING TRANSMEMBRANE ADAPTER 1"/>
    <property type="match status" value="1"/>
</dbReference>
<feature type="chain" id="PRO_0000083341" description="Signaling threshold-regulating transmembrane adapter 1">
    <location>
        <begin position="1"/>
        <end position="180"/>
    </location>
</feature>
<feature type="topological domain" description="Extracellular" evidence="4">
    <location>
        <begin position="1"/>
        <end position="24"/>
    </location>
</feature>
<feature type="transmembrane region" description="Helical; Signal-anchor for type III membrane protein" evidence="4">
    <location>
        <begin position="25"/>
        <end position="45"/>
    </location>
</feature>
<feature type="topological domain" description="Cytoplasmic" evidence="4">
    <location>
        <begin position="46"/>
        <end position="180"/>
    </location>
</feature>
<feature type="region of interest" description="Interaction with GRB2" evidence="1">
    <location>
        <begin position="73"/>
        <end position="76"/>
    </location>
</feature>
<feature type="region of interest" description="Disordered" evidence="5">
    <location>
        <begin position="81"/>
        <end position="103"/>
    </location>
</feature>
<feature type="region of interest" description="Interaction with PTPN11" evidence="1">
    <location>
        <begin position="130"/>
        <end position="135"/>
    </location>
</feature>
<feature type="region of interest" description="Interaction with CSK" evidence="1">
    <location>
        <begin position="153"/>
        <end position="156"/>
    </location>
</feature>
<feature type="region of interest" description="Interaction with GRB2" evidence="1">
    <location>
        <begin position="172"/>
        <end position="175"/>
    </location>
</feature>
<feature type="modified residue" description="Phosphoserine" evidence="3">
    <location>
        <position position="63"/>
    </location>
</feature>
<feature type="modified residue" description="Phosphoserine" evidence="2">
    <location>
        <position position="66"/>
    </location>
</feature>
<feature type="modified residue" description="Phosphotyrosine" evidence="3">
    <location>
        <position position="73"/>
    </location>
</feature>
<feature type="modified residue" description="Phosphoserine" evidence="3">
    <location>
        <position position="85"/>
    </location>
</feature>
<feature type="modified residue" description="Phosphoserine" evidence="2">
    <location>
        <position position="90"/>
    </location>
</feature>
<feature type="modified residue" description="Phosphotyrosine" evidence="3">
    <location>
        <position position="111"/>
    </location>
</feature>
<feature type="modified residue" description="Phosphotyrosine" evidence="3">
    <location>
        <position position="132"/>
    </location>
</feature>
<feature type="modified residue" description="Phosphotyrosine" evidence="3">
    <location>
        <position position="153"/>
    </location>
</feature>
<feature type="modified residue" description="Phosphoserine" evidence="8">
    <location>
        <position position="166"/>
    </location>
</feature>
<feature type="modified residue" description="Phosphotyrosine" evidence="3">
    <location>
        <position position="172"/>
    </location>
</feature>
<feature type="glycosylation site" description="N-linked (GlcNAc...) asparagine" evidence="4">
    <location>
        <position position="6"/>
    </location>
</feature>
<feature type="disulfide bond" description="Interchain" evidence="1">
    <location>
        <position position="7"/>
    </location>
</feature>
<feature type="sequence conflict" description="In Ref. 1; CAB41506." evidence="7" ref="1">
    <original>L</original>
    <variation>H</variation>
    <location>
        <position position="62"/>
    </location>
</feature>
<protein>
    <recommendedName>
        <fullName>Signaling threshold-regulating transmembrane adapter 1</fullName>
    </recommendedName>
    <alternativeName>
        <fullName>SHP2-interacting transmembrane adapter protein</fullName>
    </alternativeName>
    <alternativeName>
        <fullName>Suppression-inducing transmembrane adapter 1</fullName>
    </alternativeName>
</protein>
<accession>Q8C503</accession>
<accession>Q9WUU5</accession>
<name>SIT1_MOUSE</name>
<gene>
    <name type="primary">Sit1</name>
    <name type="synonym">Sit</name>
</gene>
<organism>
    <name type="scientific">Mus musculus</name>
    <name type="common">Mouse</name>
    <dbReference type="NCBI Taxonomy" id="10090"/>
    <lineage>
        <taxon>Eukaryota</taxon>
        <taxon>Metazoa</taxon>
        <taxon>Chordata</taxon>
        <taxon>Craniata</taxon>
        <taxon>Vertebrata</taxon>
        <taxon>Euteleostomi</taxon>
        <taxon>Mammalia</taxon>
        <taxon>Eutheria</taxon>
        <taxon>Euarchontoglires</taxon>
        <taxon>Glires</taxon>
        <taxon>Rodentia</taxon>
        <taxon>Myomorpha</taxon>
        <taxon>Muroidea</taxon>
        <taxon>Muridae</taxon>
        <taxon>Murinae</taxon>
        <taxon>Mus</taxon>
        <taxon>Mus</taxon>
    </lineage>
</organism>
<keyword id="KW-1064">Adaptive immunity</keyword>
<keyword id="KW-1003">Cell membrane</keyword>
<keyword id="KW-1015">Disulfide bond</keyword>
<keyword id="KW-0325">Glycoprotein</keyword>
<keyword id="KW-0391">Immunity</keyword>
<keyword id="KW-0472">Membrane</keyword>
<keyword id="KW-0597">Phosphoprotein</keyword>
<keyword id="KW-1185">Reference proteome</keyword>
<keyword id="KW-0735">Signal-anchor</keyword>
<keyword id="KW-0812">Transmembrane</keyword>
<keyword id="KW-1133">Transmembrane helix</keyword>
<evidence type="ECO:0000250" key="1"/>
<evidence type="ECO:0000250" key="2">
    <source>
        <dbReference type="UniProtKB" id="Q5M869"/>
    </source>
</evidence>
<evidence type="ECO:0000250" key="3">
    <source>
        <dbReference type="UniProtKB" id="Q9Y3P8"/>
    </source>
</evidence>
<evidence type="ECO:0000255" key="4"/>
<evidence type="ECO:0000256" key="5">
    <source>
        <dbReference type="SAM" id="MobiDB-lite"/>
    </source>
</evidence>
<evidence type="ECO:0000269" key="6">
    <source>
    </source>
</evidence>
<evidence type="ECO:0000305" key="7"/>
<evidence type="ECO:0007744" key="8">
    <source>
    </source>
</evidence>